<proteinExistence type="inferred from homology"/>
<evidence type="ECO:0000255" key="1">
    <source>
        <dbReference type="HAMAP-Rule" id="MF_01366"/>
    </source>
</evidence>
<evidence type="ECO:0000305" key="2"/>
<reference key="1">
    <citation type="journal article" date="2011" name="Stand. Genomic Sci.">
        <title>Complete genome sequence of the halophilic and highly halotolerant Chromohalobacter salexigens type strain (1H11(T)).</title>
        <authorList>
            <person name="Copeland A."/>
            <person name="O'Connor K."/>
            <person name="Lucas S."/>
            <person name="Lapidus A."/>
            <person name="Berry K.W."/>
            <person name="Detter J.C."/>
            <person name="Del Rio T.G."/>
            <person name="Hammon N."/>
            <person name="Dalin E."/>
            <person name="Tice H."/>
            <person name="Pitluck S."/>
            <person name="Bruce D."/>
            <person name="Goodwin L."/>
            <person name="Han C."/>
            <person name="Tapia R."/>
            <person name="Saunders E."/>
            <person name="Schmutz J."/>
            <person name="Brettin T."/>
            <person name="Larimer F."/>
            <person name="Land M."/>
            <person name="Hauser L."/>
            <person name="Vargas C."/>
            <person name="Nieto J.J."/>
            <person name="Kyrpides N.C."/>
            <person name="Ivanova N."/>
            <person name="Goker M."/>
            <person name="Klenk H.P."/>
            <person name="Csonka L.N."/>
            <person name="Woyke T."/>
        </authorList>
    </citation>
    <scope>NUCLEOTIDE SEQUENCE [LARGE SCALE GENOMIC DNA]</scope>
    <source>
        <strain>ATCC BAA-138 / DSM 3043 / CIP 106854 / NCIMB 13768 / 1H11</strain>
    </source>
</reference>
<dbReference type="EMBL" id="CP000285">
    <property type="protein sequence ID" value="ABE59558.1"/>
    <property type="molecule type" value="Genomic_DNA"/>
</dbReference>
<dbReference type="RefSeq" id="WP_011507504.1">
    <property type="nucleotide sequence ID" value="NC_007963.1"/>
</dbReference>
<dbReference type="SMR" id="Q1QVF0"/>
<dbReference type="STRING" id="290398.Csal_2207"/>
<dbReference type="GeneID" id="95334925"/>
<dbReference type="KEGG" id="csa:Csal_2207"/>
<dbReference type="eggNOG" id="COG0102">
    <property type="taxonomic scope" value="Bacteria"/>
</dbReference>
<dbReference type="HOGENOM" id="CLU_082184_2_2_6"/>
<dbReference type="OrthoDB" id="9801330at2"/>
<dbReference type="Proteomes" id="UP000000239">
    <property type="component" value="Chromosome"/>
</dbReference>
<dbReference type="GO" id="GO:0022625">
    <property type="term" value="C:cytosolic large ribosomal subunit"/>
    <property type="evidence" value="ECO:0007669"/>
    <property type="project" value="TreeGrafter"/>
</dbReference>
<dbReference type="GO" id="GO:0003729">
    <property type="term" value="F:mRNA binding"/>
    <property type="evidence" value="ECO:0007669"/>
    <property type="project" value="TreeGrafter"/>
</dbReference>
<dbReference type="GO" id="GO:0003735">
    <property type="term" value="F:structural constituent of ribosome"/>
    <property type="evidence" value="ECO:0007669"/>
    <property type="project" value="InterPro"/>
</dbReference>
<dbReference type="GO" id="GO:0017148">
    <property type="term" value="P:negative regulation of translation"/>
    <property type="evidence" value="ECO:0007669"/>
    <property type="project" value="TreeGrafter"/>
</dbReference>
<dbReference type="GO" id="GO:0006412">
    <property type="term" value="P:translation"/>
    <property type="evidence" value="ECO:0007669"/>
    <property type="project" value="UniProtKB-UniRule"/>
</dbReference>
<dbReference type="CDD" id="cd00392">
    <property type="entry name" value="Ribosomal_L13"/>
    <property type="match status" value="1"/>
</dbReference>
<dbReference type="FunFam" id="3.90.1180.10:FF:000001">
    <property type="entry name" value="50S ribosomal protein L13"/>
    <property type="match status" value="1"/>
</dbReference>
<dbReference type="Gene3D" id="3.90.1180.10">
    <property type="entry name" value="Ribosomal protein L13"/>
    <property type="match status" value="1"/>
</dbReference>
<dbReference type="HAMAP" id="MF_01366">
    <property type="entry name" value="Ribosomal_uL13"/>
    <property type="match status" value="1"/>
</dbReference>
<dbReference type="InterPro" id="IPR005822">
    <property type="entry name" value="Ribosomal_uL13"/>
</dbReference>
<dbReference type="InterPro" id="IPR005823">
    <property type="entry name" value="Ribosomal_uL13_bac-type"/>
</dbReference>
<dbReference type="InterPro" id="IPR023563">
    <property type="entry name" value="Ribosomal_uL13_CS"/>
</dbReference>
<dbReference type="InterPro" id="IPR036899">
    <property type="entry name" value="Ribosomal_uL13_sf"/>
</dbReference>
<dbReference type="NCBIfam" id="TIGR01066">
    <property type="entry name" value="rplM_bact"/>
    <property type="match status" value="1"/>
</dbReference>
<dbReference type="PANTHER" id="PTHR11545:SF2">
    <property type="entry name" value="LARGE RIBOSOMAL SUBUNIT PROTEIN UL13M"/>
    <property type="match status" value="1"/>
</dbReference>
<dbReference type="PANTHER" id="PTHR11545">
    <property type="entry name" value="RIBOSOMAL PROTEIN L13"/>
    <property type="match status" value="1"/>
</dbReference>
<dbReference type="Pfam" id="PF00572">
    <property type="entry name" value="Ribosomal_L13"/>
    <property type="match status" value="1"/>
</dbReference>
<dbReference type="PIRSF" id="PIRSF002181">
    <property type="entry name" value="Ribosomal_L13"/>
    <property type="match status" value="1"/>
</dbReference>
<dbReference type="SUPFAM" id="SSF52161">
    <property type="entry name" value="Ribosomal protein L13"/>
    <property type="match status" value="1"/>
</dbReference>
<dbReference type="PROSITE" id="PS00783">
    <property type="entry name" value="RIBOSOMAL_L13"/>
    <property type="match status" value="1"/>
</dbReference>
<feature type="chain" id="PRO_0000261710" description="Large ribosomal subunit protein uL13">
    <location>
        <begin position="1"/>
        <end position="142"/>
    </location>
</feature>
<comment type="function">
    <text evidence="1">This protein is one of the early assembly proteins of the 50S ribosomal subunit, although it is not seen to bind rRNA by itself. It is important during the early stages of 50S assembly.</text>
</comment>
<comment type="subunit">
    <text evidence="1">Part of the 50S ribosomal subunit.</text>
</comment>
<comment type="similarity">
    <text evidence="1">Belongs to the universal ribosomal protein uL13 family.</text>
</comment>
<name>RL13_CHRSD</name>
<sequence>MKTFSAKPQSVTRDWYVVDATDKTLGRLATEIARRLRGKHKPEYTPHVDTGDYIVVVNAEKVRVTGNKAQAKNYYRHTGYPGGLRSMSFEKLIDHAPERVIESAVKGMLPKGPLGRAMYSKLKVYAGAEHPHAAQQPLELNL</sequence>
<keyword id="KW-1185">Reference proteome</keyword>
<keyword id="KW-0687">Ribonucleoprotein</keyword>
<keyword id="KW-0689">Ribosomal protein</keyword>
<accession>Q1QVF0</accession>
<protein>
    <recommendedName>
        <fullName evidence="1">Large ribosomal subunit protein uL13</fullName>
    </recommendedName>
    <alternativeName>
        <fullName evidence="2">50S ribosomal protein L13</fullName>
    </alternativeName>
</protein>
<organism>
    <name type="scientific">Chromohalobacter salexigens (strain ATCC BAA-138 / DSM 3043 / CIP 106854 / NCIMB 13768 / 1H11)</name>
    <dbReference type="NCBI Taxonomy" id="290398"/>
    <lineage>
        <taxon>Bacteria</taxon>
        <taxon>Pseudomonadati</taxon>
        <taxon>Pseudomonadota</taxon>
        <taxon>Gammaproteobacteria</taxon>
        <taxon>Oceanospirillales</taxon>
        <taxon>Halomonadaceae</taxon>
        <taxon>Chromohalobacter</taxon>
    </lineage>
</organism>
<gene>
    <name evidence="1" type="primary">rplM</name>
    <name type="ordered locus">Csal_2207</name>
</gene>